<gene>
    <name evidence="1" type="primary">guaA</name>
    <name type="ordered locus">Pnec_0530</name>
</gene>
<reference key="1">
    <citation type="journal article" date="2013" name="Proc. Natl. Acad. Sci. U.S.A.">
        <title>Polynucleobacter necessarius, a model for genome reduction in both free-living and symbiotic bacteria.</title>
        <authorList>
            <person name="Boscaro V."/>
            <person name="Felletti M."/>
            <person name="Vannini C."/>
            <person name="Ackerman M.S."/>
            <person name="Chain P.S."/>
            <person name="Malfatti S."/>
            <person name="Vergez L.M."/>
            <person name="Shin M."/>
            <person name="Doak T.G."/>
            <person name="Lynch M."/>
            <person name="Petroni G."/>
        </authorList>
    </citation>
    <scope>NUCLEOTIDE SEQUENCE [LARGE SCALE GENOMIC DNA]</scope>
    <source>
        <strain>STIR1</strain>
    </source>
</reference>
<proteinExistence type="inferred from homology"/>
<organism>
    <name type="scientific">Polynucleobacter necessarius subsp. necessarius (strain STIR1)</name>
    <dbReference type="NCBI Taxonomy" id="452638"/>
    <lineage>
        <taxon>Bacteria</taxon>
        <taxon>Pseudomonadati</taxon>
        <taxon>Pseudomonadota</taxon>
        <taxon>Betaproteobacteria</taxon>
        <taxon>Burkholderiales</taxon>
        <taxon>Burkholderiaceae</taxon>
        <taxon>Polynucleobacter</taxon>
    </lineage>
</organism>
<evidence type="ECO:0000255" key="1">
    <source>
        <dbReference type="HAMAP-Rule" id="MF_00344"/>
    </source>
</evidence>
<dbReference type="EC" id="6.3.5.2" evidence="1"/>
<dbReference type="EMBL" id="CP001010">
    <property type="protein sequence ID" value="ACB43793.1"/>
    <property type="molecule type" value="Genomic_DNA"/>
</dbReference>
<dbReference type="SMR" id="B1XTW6"/>
<dbReference type="STRING" id="452638.Pnec_0530"/>
<dbReference type="MEROPS" id="C26.957"/>
<dbReference type="KEGG" id="pne:Pnec_0530"/>
<dbReference type="eggNOG" id="COG0518">
    <property type="taxonomic scope" value="Bacteria"/>
</dbReference>
<dbReference type="eggNOG" id="COG0519">
    <property type="taxonomic scope" value="Bacteria"/>
</dbReference>
<dbReference type="HOGENOM" id="CLU_014340_0_5_4"/>
<dbReference type="OrthoDB" id="9802219at2"/>
<dbReference type="UniPathway" id="UPA00189">
    <property type="reaction ID" value="UER00296"/>
</dbReference>
<dbReference type="GO" id="GO:0005829">
    <property type="term" value="C:cytosol"/>
    <property type="evidence" value="ECO:0007669"/>
    <property type="project" value="TreeGrafter"/>
</dbReference>
<dbReference type="GO" id="GO:0005524">
    <property type="term" value="F:ATP binding"/>
    <property type="evidence" value="ECO:0007669"/>
    <property type="project" value="UniProtKB-UniRule"/>
</dbReference>
<dbReference type="GO" id="GO:0003921">
    <property type="term" value="F:GMP synthase activity"/>
    <property type="evidence" value="ECO:0007669"/>
    <property type="project" value="InterPro"/>
</dbReference>
<dbReference type="CDD" id="cd01742">
    <property type="entry name" value="GATase1_GMP_Synthase"/>
    <property type="match status" value="1"/>
</dbReference>
<dbReference type="CDD" id="cd01997">
    <property type="entry name" value="GMP_synthase_C"/>
    <property type="match status" value="1"/>
</dbReference>
<dbReference type="FunFam" id="3.30.300.10:FF:000002">
    <property type="entry name" value="GMP synthase [glutamine-hydrolyzing]"/>
    <property type="match status" value="1"/>
</dbReference>
<dbReference type="FunFam" id="3.40.50.620:FF:000001">
    <property type="entry name" value="GMP synthase [glutamine-hydrolyzing]"/>
    <property type="match status" value="1"/>
</dbReference>
<dbReference type="FunFam" id="3.40.50.880:FF:000001">
    <property type="entry name" value="GMP synthase [glutamine-hydrolyzing]"/>
    <property type="match status" value="1"/>
</dbReference>
<dbReference type="Gene3D" id="3.30.300.10">
    <property type="match status" value="1"/>
</dbReference>
<dbReference type="Gene3D" id="3.40.50.880">
    <property type="match status" value="1"/>
</dbReference>
<dbReference type="Gene3D" id="3.40.50.620">
    <property type="entry name" value="HUPs"/>
    <property type="match status" value="1"/>
</dbReference>
<dbReference type="HAMAP" id="MF_00344">
    <property type="entry name" value="GMP_synthase"/>
    <property type="match status" value="1"/>
</dbReference>
<dbReference type="InterPro" id="IPR029062">
    <property type="entry name" value="Class_I_gatase-like"/>
</dbReference>
<dbReference type="InterPro" id="IPR017926">
    <property type="entry name" value="GATASE"/>
</dbReference>
<dbReference type="InterPro" id="IPR001674">
    <property type="entry name" value="GMP_synth_C"/>
</dbReference>
<dbReference type="InterPro" id="IPR004739">
    <property type="entry name" value="GMP_synth_GATase"/>
</dbReference>
<dbReference type="InterPro" id="IPR022955">
    <property type="entry name" value="GMP_synthase"/>
</dbReference>
<dbReference type="InterPro" id="IPR025777">
    <property type="entry name" value="GMPS_ATP_PPase_dom"/>
</dbReference>
<dbReference type="InterPro" id="IPR022310">
    <property type="entry name" value="NAD/GMP_synthase"/>
</dbReference>
<dbReference type="InterPro" id="IPR014729">
    <property type="entry name" value="Rossmann-like_a/b/a_fold"/>
</dbReference>
<dbReference type="NCBIfam" id="TIGR00884">
    <property type="entry name" value="guaA_Cterm"/>
    <property type="match status" value="1"/>
</dbReference>
<dbReference type="NCBIfam" id="TIGR00888">
    <property type="entry name" value="guaA_Nterm"/>
    <property type="match status" value="1"/>
</dbReference>
<dbReference type="NCBIfam" id="NF000848">
    <property type="entry name" value="PRK00074.1"/>
    <property type="match status" value="1"/>
</dbReference>
<dbReference type="PANTHER" id="PTHR11922:SF2">
    <property type="entry name" value="GMP SYNTHASE [GLUTAMINE-HYDROLYZING]"/>
    <property type="match status" value="1"/>
</dbReference>
<dbReference type="PANTHER" id="PTHR11922">
    <property type="entry name" value="GMP SYNTHASE-RELATED"/>
    <property type="match status" value="1"/>
</dbReference>
<dbReference type="Pfam" id="PF00117">
    <property type="entry name" value="GATase"/>
    <property type="match status" value="1"/>
</dbReference>
<dbReference type="Pfam" id="PF00958">
    <property type="entry name" value="GMP_synt_C"/>
    <property type="match status" value="1"/>
</dbReference>
<dbReference type="Pfam" id="PF02540">
    <property type="entry name" value="NAD_synthase"/>
    <property type="match status" value="1"/>
</dbReference>
<dbReference type="PRINTS" id="PR00097">
    <property type="entry name" value="ANTSNTHASEII"/>
</dbReference>
<dbReference type="PRINTS" id="PR00096">
    <property type="entry name" value="GATASE"/>
</dbReference>
<dbReference type="SUPFAM" id="SSF52402">
    <property type="entry name" value="Adenine nucleotide alpha hydrolases-like"/>
    <property type="match status" value="1"/>
</dbReference>
<dbReference type="SUPFAM" id="SSF52317">
    <property type="entry name" value="Class I glutamine amidotransferase-like"/>
    <property type="match status" value="1"/>
</dbReference>
<dbReference type="SUPFAM" id="SSF54810">
    <property type="entry name" value="GMP synthetase C-terminal dimerisation domain"/>
    <property type="match status" value="1"/>
</dbReference>
<dbReference type="PROSITE" id="PS51273">
    <property type="entry name" value="GATASE_TYPE_1"/>
    <property type="match status" value="1"/>
</dbReference>
<dbReference type="PROSITE" id="PS51553">
    <property type="entry name" value="GMPS_ATP_PPASE"/>
    <property type="match status" value="1"/>
</dbReference>
<accession>B1XTW6</accession>
<keyword id="KW-0067">ATP-binding</keyword>
<keyword id="KW-0315">Glutamine amidotransferase</keyword>
<keyword id="KW-0332">GMP biosynthesis</keyword>
<keyword id="KW-0436">Ligase</keyword>
<keyword id="KW-0547">Nucleotide-binding</keyword>
<keyword id="KW-0658">Purine biosynthesis</keyword>
<feature type="chain" id="PRO_1000120354" description="GMP synthase [glutamine-hydrolyzing]">
    <location>
        <begin position="1"/>
        <end position="535"/>
    </location>
</feature>
<feature type="domain" description="Glutamine amidotransferase type-1" evidence="1">
    <location>
        <begin position="4"/>
        <end position="210"/>
    </location>
</feature>
<feature type="domain" description="GMPS ATP-PPase" evidence="1">
    <location>
        <begin position="211"/>
        <end position="403"/>
    </location>
</feature>
<feature type="active site" description="Nucleophile" evidence="1">
    <location>
        <position position="85"/>
    </location>
</feature>
<feature type="active site" evidence="1">
    <location>
        <position position="184"/>
    </location>
</feature>
<feature type="active site" evidence="1">
    <location>
        <position position="186"/>
    </location>
</feature>
<feature type="binding site" evidence="1">
    <location>
        <begin position="238"/>
        <end position="244"/>
    </location>
    <ligand>
        <name>ATP</name>
        <dbReference type="ChEBI" id="CHEBI:30616"/>
    </ligand>
</feature>
<protein>
    <recommendedName>
        <fullName evidence="1">GMP synthase [glutamine-hydrolyzing]</fullName>
        <ecNumber evidence="1">6.3.5.2</ecNumber>
    </recommendedName>
    <alternativeName>
        <fullName evidence="1">GMP synthetase</fullName>
    </alternativeName>
    <alternativeName>
        <fullName evidence="1">Glutamine amidotransferase</fullName>
    </alternativeName>
</protein>
<comment type="function">
    <text evidence="1">Catalyzes the synthesis of GMP from XMP.</text>
</comment>
<comment type="catalytic activity">
    <reaction evidence="1">
        <text>XMP + L-glutamine + ATP + H2O = GMP + L-glutamate + AMP + diphosphate + 2 H(+)</text>
        <dbReference type="Rhea" id="RHEA:11680"/>
        <dbReference type="ChEBI" id="CHEBI:15377"/>
        <dbReference type="ChEBI" id="CHEBI:15378"/>
        <dbReference type="ChEBI" id="CHEBI:29985"/>
        <dbReference type="ChEBI" id="CHEBI:30616"/>
        <dbReference type="ChEBI" id="CHEBI:33019"/>
        <dbReference type="ChEBI" id="CHEBI:57464"/>
        <dbReference type="ChEBI" id="CHEBI:58115"/>
        <dbReference type="ChEBI" id="CHEBI:58359"/>
        <dbReference type="ChEBI" id="CHEBI:456215"/>
        <dbReference type="EC" id="6.3.5.2"/>
    </reaction>
</comment>
<comment type="pathway">
    <text evidence="1">Purine metabolism; GMP biosynthesis; GMP from XMP (L-Gln route): step 1/1.</text>
</comment>
<comment type="subunit">
    <text evidence="1">Homodimer.</text>
</comment>
<sequence>MHDKILILDFGSQVTQLIARRVRDGRVYSEIHPYDCDPELIRKFIQEQGGKGIILSGGPSSVTEEGSPRAPQIVFELGVPVLGICYGMQTMATQLGGAVASAESLGKAREFGYSEVRAHGHTNLLKGIQDFSTSEGHGILKVWMSHGDSVTTLPSSFKLMASTESCPIAGMADEERSFYAFQFHPEVTHTIQGTAIIERFVHEICKCKPDWVMGDYIAEAVENIRKQVGDEEVILGLSGGVDSSVAAALIHRAIGDQLTCVFVDHGLLRLNEGDMVMEMFARNLGVKVIRVDAKETFMGELAGVSDPEAKRKIIGKEFVEIFQAESGKIKNAKWLAQGTIYPDVIESAGKGKKGAHTIKSHHNVGGLPEDMHLKLLEPLRELFKDEVRELGVALGLPREMVYRHPFPGPGLGVRILGEVKAEFASLLQRADAIFIEELRNTIDEVSQKSWYDLTSQAFAVFLPVKSVGVMGDGRTYEYVVALRAVQTQDFMTAHWAHLPHELLGKVFNRIINEVRGINRVVYDISGKPPATIEWE</sequence>
<name>GUAA_POLNS</name>